<sequence>MNLIPTVIETTNRGERAYDIYSRLLKDRIIMLGSAIDDNVANSIVSQLLFLQAQDAEKDIYLYINSPGGSVTAGFAIYDTIQHIKPDVQTICIGMAASMGSFLLAAGAKGKRFALPNAEVMIHQPLGGAQGQATEIEIAATHILKTRAKLNKILAERTGQSIEQIEKDTDRDNFLTADEAKEYGLIDEVMQPEK</sequence>
<gene>
    <name evidence="1" type="primary">clpP</name>
    <name type="ordered locus">Sca_0419</name>
</gene>
<comment type="function">
    <text evidence="1">Cleaves peptides in various proteins in a process that requires ATP hydrolysis. Has a chymotrypsin-like activity. Plays a major role in the degradation of misfolded proteins.</text>
</comment>
<comment type="catalytic activity">
    <reaction evidence="1">
        <text>Hydrolysis of proteins to small peptides in the presence of ATP and magnesium. alpha-casein is the usual test substrate. In the absence of ATP, only oligopeptides shorter than five residues are hydrolyzed (such as succinyl-Leu-Tyr-|-NHMec, and Leu-Tyr-Leu-|-Tyr-Trp, in which cleavage of the -Tyr-|-Leu- and -Tyr-|-Trp bonds also occurs).</text>
        <dbReference type="EC" id="3.4.21.92"/>
    </reaction>
</comment>
<comment type="subunit">
    <text evidence="1">Fourteen ClpP subunits assemble into 2 heptameric rings which stack back to back to give a disk-like structure with a central cavity, resembling the structure of eukaryotic proteasomes.</text>
</comment>
<comment type="subcellular location">
    <subcellularLocation>
        <location evidence="1">Cytoplasm</location>
    </subcellularLocation>
</comment>
<comment type="similarity">
    <text evidence="1">Belongs to the peptidase S14 family.</text>
</comment>
<protein>
    <recommendedName>
        <fullName evidence="1">ATP-dependent Clp protease proteolytic subunit</fullName>
        <ecNumber evidence="1">3.4.21.92</ecNumber>
    </recommendedName>
    <alternativeName>
        <fullName evidence="1">Endopeptidase Clp</fullName>
    </alternativeName>
</protein>
<feature type="chain" id="PRO_1000135164" description="ATP-dependent Clp protease proteolytic subunit">
    <location>
        <begin position="1"/>
        <end position="194"/>
    </location>
</feature>
<feature type="active site" description="Nucleophile" evidence="1">
    <location>
        <position position="98"/>
    </location>
</feature>
<feature type="active site" evidence="1">
    <location>
        <position position="123"/>
    </location>
</feature>
<evidence type="ECO:0000255" key="1">
    <source>
        <dbReference type="HAMAP-Rule" id="MF_00444"/>
    </source>
</evidence>
<reference key="1">
    <citation type="journal article" date="2009" name="Appl. Environ. Microbiol.">
        <title>Genome analysis of the meat starter culture bacterium Staphylococcus carnosus TM300.</title>
        <authorList>
            <person name="Rosenstein R."/>
            <person name="Nerz C."/>
            <person name="Biswas L."/>
            <person name="Resch A."/>
            <person name="Raddatz G."/>
            <person name="Schuster S.C."/>
            <person name="Goetz F."/>
        </authorList>
    </citation>
    <scope>NUCLEOTIDE SEQUENCE [LARGE SCALE GENOMIC DNA]</scope>
    <source>
        <strain>TM300</strain>
    </source>
</reference>
<proteinExistence type="inferred from homology"/>
<organism>
    <name type="scientific">Staphylococcus carnosus (strain TM300)</name>
    <dbReference type="NCBI Taxonomy" id="396513"/>
    <lineage>
        <taxon>Bacteria</taxon>
        <taxon>Bacillati</taxon>
        <taxon>Bacillota</taxon>
        <taxon>Bacilli</taxon>
        <taxon>Bacillales</taxon>
        <taxon>Staphylococcaceae</taxon>
        <taxon>Staphylococcus</taxon>
    </lineage>
</organism>
<dbReference type="EC" id="3.4.21.92" evidence="1"/>
<dbReference type="EMBL" id="AM295250">
    <property type="protein sequence ID" value="CAL27333.1"/>
    <property type="molecule type" value="Genomic_DNA"/>
</dbReference>
<dbReference type="RefSeq" id="WP_015899677.1">
    <property type="nucleotide sequence ID" value="NC_012121.1"/>
</dbReference>
<dbReference type="SMR" id="B9DJL4"/>
<dbReference type="MEROPS" id="S14.001"/>
<dbReference type="GeneID" id="93795349"/>
<dbReference type="KEGG" id="sca:SCA_0419"/>
<dbReference type="eggNOG" id="COG0740">
    <property type="taxonomic scope" value="Bacteria"/>
</dbReference>
<dbReference type="HOGENOM" id="CLU_058707_3_2_9"/>
<dbReference type="OrthoDB" id="9802800at2"/>
<dbReference type="BioCyc" id="SCAR396513:SCA_RS02135-MONOMER"/>
<dbReference type="Proteomes" id="UP000000444">
    <property type="component" value="Chromosome"/>
</dbReference>
<dbReference type="GO" id="GO:0005737">
    <property type="term" value="C:cytoplasm"/>
    <property type="evidence" value="ECO:0007669"/>
    <property type="project" value="UniProtKB-SubCell"/>
</dbReference>
<dbReference type="GO" id="GO:0009368">
    <property type="term" value="C:endopeptidase Clp complex"/>
    <property type="evidence" value="ECO:0007669"/>
    <property type="project" value="TreeGrafter"/>
</dbReference>
<dbReference type="GO" id="GO:0004176">
    <property type="term" value="F:ATP-dependent peptidase activity"/>
    <property type="evidence" value="ECO:0007669"/>
    <property type="project" value="InterPro"/>
</dbReference>
<dbReference type="GO" id="GO:0051117">
    <property type="term" value="F:ATPase binding"/>
    <property type="evidence" value="ECO:0007669"/>
    <property type="project" value="TreeGrafter"/>
</dbReference>
<dbReference type="GO" id="GO:0004252">
    <property type="term" value="F:serine-type endopeptidase activity"/>
    <property type="evidence" value="ECO:0007669"/>
    <property type="project" value="UniProtKB-UniRule"/>
</dbReference>
<dbReference type="GO" id="GO:0006515">
    <property type="term" value="P:protein quality control for misfolded or incompletely synthesized proteins"/>
    <property type="evidence" value="ECO:0007669"/>
    <property type="project" value="TreeGrafter"/>
</dbReference>
<dbReference type="CDD" id="cd07017">
    <property type="entry name" value="S14_ClpP_2"/>
    <property type="match status" value="1"/>
</dbReference>
<dbReference type="FunFam" id="3.90.226.10:FF:000001">
    <property type="entry name" value="ATP-dependent Clp protease proteolytic subunit"/>
    <property type="match status" value="1"/>
</dbReference>
<dbReference type="Gene3D" id="3.90.226.10">
    <property type="entry name" value="2-enoyl-CoA Hydratase, Chain A, domain 1"/>
    <property type="match status" value="1"/>
</dbReference>
<dbReference type="HAMAP" id="MF_00444">
    <property type="entry name" value="ClpP"/>
    <property type="match status" value="1"/>
</dbReference>
<dbReference type="InterPro" id="IPR001907">
    <property type="entry name" value="ClpP"/>
</dbReference>
<dbReference type="InterPro" id="IPR029045">
    <property type="entry name" value="ClpP/crotonase-like_dom_sf"/>
</dbReference>
<dbReference type="InterPro" id="IPR023562">
    <property type="entry name" value="ClpP/TepA"/>
</dbReference>
<dbReference type="InterPro" id="IPR033135">
    <property type="entry name" value="ClpP_His_AS"/>
</dbReference>
<dbReference type="InterPro" id="IPR018215">
    <property type="entry name" value="ClpP_Ser_AS"/>
</dbReference>
<dbReference type="NCBIfam" id="TIGR00493">
    <property type="entry name" value="clpP"/>
    <property type="match status" value="1"/>
</dbReference>
<dbReference type="NCBIfam" id="NF001368">
    <property type="entry name" value="PRK00277.1"/>
    <property type="match status" value="1"/>
</dbReference>
<dbReference type="NCBIfam" id="NF009205">
    <property type="entry name" value="PRK12553.1"/>
    <property type="match status" value="1"/>
</dbReference>
<dbReference type="PANTHER" id="PTHR10381">
    <property type="entry name" value="ATP-DEPENDENT CLP PROTEASE PROTEOLYTIC SUBUNIT"/>
    <property type="match status" value="1"/>
</dbReference>
<dbReference type="PANTHER" id="PTHR10381:SF70">
    <property type="entry name" value="ATP-DEPENDENT CLP PROTEASE PROTEOLYTIC SUBUNIT"/>
    <property type="match status" value="1"/>
</dbReference>
<dbReference type="Pfam" id="PF00574">
    <property type="entry name" value="CLP_protease"/>
    <property type="match status" value="1"/>
</dbReference>
<dbReference type="PRINTS" id="PR00127">
    <property type="entry name" value="CLPPROTEASEP"/>
</dbReference>
<dbReference type="SUPFAM" id="SSF52096">
    <property type="entry name" value="ClpP/crotonase"/>
    <property type="match status" value="1"/>
</dbReference>
<dbReference type="PROSITE" id="PS00382">
    <property type="entry name" value="CLP_PROTEASE_HIS"/>
    <property type="match status" value="1"/>
</dbReference>
<dbReference type="PROSITE" id="PS00381">
    <property type="entry name" value="CLP_PROTEASE_SER"/>
    <property type="match status" value="1"/>
</dbReference>
<accession>B9DJL4</accession>
<keyword id="KW-0963">Cytoplasm</keyword>
<keyword id="KW-0378">Hydrolase</keyword>
<keyword id="KW-0645">Protease</keyword>
<keyword id="KW-1185">Reference proteome</keyword>
<keyword id="KW-0720">Serine protease</keyword>
<name>CLPP_STACT</name>